<feature type="initiator methionine" description="Removed" evidence="2">
    <location>
        <position position="1"/>
    </location>
</feature>
<feature type="chain" id="PRO_0000285099" description="Golgi integral membrane protein 4">
    <location>
        <begin position="2"/>
        <end position="653"/>
    </location>
</feature>
<feature type="topological domain" description="Cytoplasmic" evidence="4">
    <location>
        <begin position="2"/>
        <end position="12"/>
    </location>
</feature>
<feature type="transmembrane region" description="Helical; Signal-anchor for type II membrane protein" evidence="4">
    <location>
        <begin position="13"/>
        <end position="33"/>
    </location>
</feature>
<feature type="topological domain" description="Lumenal" evidence="4">
    <location>
        <begin position="34"/>
        <end position="653"/>
    </location>
</feature>
<feature type="region of interest" description="Golgi targeting" evidence="1">
    <location>
        <begin position="38"/>
        <end position="107"/>
    </location>
</feature>
<feature type="region of interest" description="Endosome targeting" evidence="1">
    <location>
        <begin position="80"/>
        <end position="175"/>
    </location>
</feature>
<feature type="region of interest" description="Disordered" evidence="5">
    <location>
        <begin position="122"/>
        <end position="143"/>
    </location>
</feature>
<feature type="region of interest" description="Golgi targeting" evidence="1">
    <location>
        <begin position="176"/>
        <end position="220"/>
    </location>
</feature>
<feature type="region of interest" description="Disordered" evidence="5">
    <location>
        <begin position="253"/>
        <end position="653"/>
    </location>
</feature>
<feature type="coiled-coil region" evidence="4">
    <location>
        <begin position="66"/>
        <end position="216"/>
    </location>
</feature>
<feature type="compositionally biased region" description="Basic and acidic residues" evidence="5">
    <location>
        <begin position="123"/>
        <end position="143"/>
    </location>
</feature>
<feature type="compositionally biased region" description="Basic and acidic residues" evidence="5">
    <location>
        <begin position="261"/>
        <end position="270"/>
    </location>
</feature>
<feature type="compositionally biased region" description="Basic and acidic residues" evidence="5">
    <location>
        <begin position="290"/>
        <end position="307"/>
    </location>
</feature>
<feature type="compositionally biased region" description="Basic and acidic residues" evidence="5">
    <location>
        <begin position="319"/>
        <end position="328"/>
    </location>
</feature>
<feature type="compositionally biased region" description="Basic and acidic residues" evidence="5">
    <location>
        <begin position="348"/>
        <end position="360"/>
    </location>
</feature>
<feature type="compositionally biased region" description="Basic and acidic residues" evidence="5">
    <location>
        <begin position="381"/>
        <end position="398"/>
    </location>
</feature>
<feature type="compositionally biased region" description="Low complexity" evidence="5">
    <location>
        <begin position="399"/>
        <end position="423"/>
    </location>
</feature>
<feature type="compositionally biased region" description="Basic and acidic residues" evidence="5">
    <location>
        <begin position="466"/>
        <end position="505"/>
    </location>
</feature>
<feature type="compositionally biased region" description="Basic and acidic residues" evidence="5">
    <location>
        <begin position="527"/>
        <end position="545"/>
    </location>
</feature>
<feature type="compositionally biased region" description="Acidic residues" evidence="5">
    <location>
        <begin position="565"/>
        <end position="587"/>
    </location>
</feature>
<feature type="compositionally biased region" description="Basic and acidic residues" evidence="5">
    <location>
        <begin position="588"/>
        <end position="599"/>
    </location>
</feature>
<feature type="compositionally biased region" description="Acidic residues" evidence="5">
    <location>
        <begin position="631"/>
        <end position="640"/>
    </location>
</feature>
<feature type="modified residue" description="Phosphoserine" evidence="8">
    <location>
        <position position="328"/>
    </location>
</feature>
<feature type="modified residue" description="Phosphoserine" evidence="8">
    <location>
        <position position="538"/>
    </location>
</feature>
<feature type="modified residue" description="Phosphotyrosine" evidence="2">
    <location>
        <position position="574"/>
    </location>
</feature>
<feature type="modified residue" description="Phosphothreonine" evidence="2">
    <location>
        <position position="587"/>
    </location>
</feature>
<feature type="modified residue" description="Phosphotyrosine" evidence="3">
    <location>
        <position position="631"/>
    </location>
</feature>
<feature type="lipid moiety-binding region" description="N-myristoyl glycine" evidence="2">
    <location>
        <position position="2"/>
    </location>
</feature>
<feature type="glycosylation site" description="N-linked (GlcNAc...) asparagine" evidence="4">
    <location>
        <position position="229"/>
    </location>
</feature>
<gene>
    <name type="primary">Golim4</name>
    <name type="synonym">Gimpc</name>
    <name type="synonym">Golph4</name>
</gene>
<comment type="function">
    <text evidence="1">Plays a role in endosome to Golgi protein trafficking; mediates protein transport along the late endosome-bypass pathway from the early endosome to the Golgi.</text>
</comment>
<comment type="subcellular location">
    <subcellularLocation>
        <location evidence="6">Golgi apparatus</location>
        <location evidence="6">Golgi stack membrane</location>
        <topology evidence="6">Single-pass type II membrane protein</topology>
    </subcellularLocation>
    <subcellularLocation>
        <location evidence="6">Endosome membrane</location>
        <topology evidence="6">Single-pass type II membrane protein</topology>
    </subcellularLocation>
    <subcellularLocation>
        <location evidence="2">Membrane</location>
        <topology evidence="2">Lipid-anchor</topology>
    </subcellularLocation>
    <text>Localizes to cis and medial Golgi cisternae. Probably cycles between early Golgi and distal compartments like endosome.</text>
</comment>
<comment type="tissue specificity">
    <text evidence="6">Expressed in liver, pancreas and pituitary (at protein level).</text>
</comment>
<comment type="PTM">
    <text evidence="6">Phosphorylated by c-AMP-dependent kinases most probably in its lumenal part.</text>
</comment>
<comment type="PTM">
    <text evidence="6">O-glycosylated; modified by sialic acid residues.</text>
</comment>
<comment type="PTM">
    <text evidence="6">N-glycosylated; N-glycans are of the complex type and modified by sialic acid residues.</text>
</comment>
<comment type="similarity">
    <text evidence="7">Belongs to the GOLIM4 family.</text>
</comment>
<evidence type="ECO:0000250" key="1"/>
<evidence type="ECO:0000250" key="2">
    <source>
        <dbReference type="UniProtKB" id="O00461"/>
    </source>
</evidence>
<evidence type="ECO:0000250" key="3">
    <source>
        <dbReference type="UniProtKB" id="Q8BXA1"/>
    </source>
</evidence>
<evidence type="ECO:0000255" key="4"/>
<evidence type="ECO:0000256" key="5">
    <source>
        <dbReference type="SAM" id="MobiDB-lite"/>
    </source>
</evidence>
<evidence type="ECO:0000269" key="6">
    <source>
    </source>
</evidence>
<evidence type="ECO:0000305" key="7"/>
<evidence type="ECO:0007744" key="8">
    <source>
    </source>
</evidence>
<proteinExistence type="evidence at protein level"/>
<organism>
    <name type="scientific">Rattus norvegicus</name>
    <name type="common">Rat</name>
    <dbReference type="NCBI Taxonomy" id="10116"/>
    <lineage>
        <taxon>Eukaryota</taxon>
        <taxon>Metazoa</taxon>
        <taxon>Chordata</taxon>
        <taxon>Craniata</taxon>
        <taxon>Vertebrata</taxon>
        <taxon>Euteleostomi</taxon>
        <taxon>Mammalia</taxon>
        <taxon>Eutheria</taxon>
        <taxon>Euarchontoglires</taxon>
        <taxon>Glires</taxon>
        <taxon>Rodentia</taxon>
        <taxon>Myomorpha</taxon>
        <taxon>Muroidea</taxon>
        <taxon>Muridae</taxon>
        <taxon>Murinae</taxon>
        <taxon>Rattus</taxon>
    </lineage>
</organism>
<protein>
    <recommendedName>
        <fullName>Golgi integral membrane protein 4</fullName>
    </recommendedName>
    <alternativeName>
        <fullName>Golgi integral membrane protein, cis</fullName>
        <shortName>GIMPc</shortName>
    </alternativeName>
    <alternativeName>
        <fullName>Golgi phosphoprotein 4</fullName>
    </alternativeName>
</protein>
<reference key="1">
    <citation type="journal article" date="2004" name="Nature">
        <title>Genome sequence of the Brown Norway rat yields insights into mammalian evolution.</title>
        <authorList>
            <person name="Gibbs R.A."/>
            <person name="Weinstock G.M."/>
            <person name="Metzker M.L."/>
            <person name="Muzny D.M."/>
            <person name="Sodergren E.J."/>
            <person name="Scherer S."/>
            <person name="Scott G."/>
            <person name="Steffen D."/>
            <person name="Worley K.C."/>
            <person name="Burch P.E."/>
            <person name="Okwuonu G."/>
            <person name="Hines S."/>
            <person name="Lewis L."/>
            <person name="Deramo C."/>
            <person name="Delgado O."/>
            <person name="Dugan-Rocha S."/>
            <person name="Miner G."/>
            <person name="Morgan M."/>
            <person name="Hawes A."/>
            <person name="Gill R."/>
            <person name="Holt R.A."/>
            <person name="Adams M.D."/>
            <person name="Amanatides P.G."/>
            <person name="Baden-Tillson H."/>
            <person name="Barnstead M."/>
            <person name="Chin S."/>
            <person name="Evans C.A."/>
            <person name="Ferriera S."/>
            <person name="Fosler C."/>
            <person name="Glodek A."/>
            <person name="Gu Z."/>
            <person name="Jennings D."/>
            <person name="Kraft C.L."/>
            <person name="Nguyen T."/>
            <person name="Pfannkoch C.M."/>
            <person name="Sitter C."/>
            <person name="Sutton G.G."/>
            <person name="Venter J.C."/>
            <person name="Woodage T."/>
            <person name="Smith D."/>
            <person name="Lee H.-M."/>
            <person name="Gustafson E."/>
            <person name="Cahill P."/>
            <person name="Kana A."/>
            <person name="Doucette-Stamm L."/>
            <person name="Weinstock K."/>
            <person name="Fechtel K."/>
            <person name="Weiss R.B."/>
            <person name="Dunn D.M."/>
            <person name="Green E.D."/>
            <person name="Blakesley R.W."/>
            <person name="Bouffard G.G."/>
            <person name="De Jong P.J."/>
            <person name="Osoegawa K."/>
            <person name="Zhu B."/>
            <person name="Marra M."/>
            <person name="Schein J."/>
            <person name="Bosdet I."/>
            <person name="Fjell C."/>
            <person name="Jones S."/>
            <person name="Krzywinski M."/>
            <person name="Mathewson C."/>
            <person name="Siddiqui A."/>
            <person name="Wye N."/>
            <person name="McPherson J."/>
            <person name="Zhao S."/>
            <person name="Fraser C.M."/>
            <person name="Shetty J."/>
            <person name="Shatsman S."/>
            <person name="Geer K."/>
            <person name="Chen Y."/>
            <person name="Abramzon S."/>
            <person name="Nierman W.C."/>
            <person name="Havlak P.H."/>
            <person name="Chen R."/>
            <person name="Durbin K.J."/>
            <person name="Egan A."/>
            <person name="Ren Y."/>
            <person name="Song X.-Z."/>
            <person name="Li B."/>
            <person name="Liu Y."/>
            <person name="Qin X."/>
            <person name="Cawley S."/>
            <person name="Cooney A.J."/>
            <person name="D'Souza L.M."/>
            <person name="Martin K."/>
            <person name="Wu J.Q."/>
            <person name="Gonzalez-Garay M.L."/>
            <person name="Jackson A.R."/>
            <person name="Kalafus K.J."/>
            <person name="McLeod M.P."/>
            <person name="Milosavljevic A."/>
            <person name="Virk D."/>
            <person name="Volkov A."/>
            <person name="Wheeler D.A."/>
            <person name="Zhang Z."/>
            <person name="Bailey J.A."/>
            <person name="Eichler E.E."/>
            <person name="Tuzun E."/>
            <person name="Birney E."/>
            <person name="Mongin E."/>
            <person name="Ureta-Vidal A."/>
            <person name="Woodwark C."/>
            <person name="Zdobnov E."/>
            <person name="Bork P."/>
            <person name="Suyama M."/>
            <person name="Torrents D."/>
            <person name="Alexandersson M."/>
            <person name="Trask B.J."/>
            <person name="Young J.M."/>
            <person name="Huang H."/>
            <person name="Wang H."/>
            <person name="Xing H."/>
            <person name="Daniels S."/>
            <person name="Gietzen D."/>
            <person name="Schmidt J."/>
            <person name="Stevens K."/>
            <person name="Vitt U."/>
            <person name="Wingrove J."/>
            <person name="Camara F."/>
            <person name="Mar Alba M."/>
            <person name="Abril J.F."/>
            <person name="Guigo R."/>
            <person name="Smit A."/>
            <person name="Dubchak I."/>
            <person name="Rubin E.M."/>
            <person name="Couronne O."/>
            <person name="Poliakov A."/>
            <person name="Huebner N."/>
            <person name="Ganten D."/>
            <person name="Goesele C."/>
            <person name="Hummel O."/>
            <person name="Kreitler T."/>
            <person name="Lee Y.-A."/>
            <person name="Monti J."/>
            <person name="Schulz H."/>
            <person name="Zimdahl H."/>
            <person name="Himmelbauer H."/>
            <person name="Lehrach H."/>
            <person name="Jacob H.J."/>
            <person name="Bromberg S."/>
            <person name="Gullings-Handley J."/>
            <person name="Jensen-Seaman M.I."/>
            <person name="Kwitek A.E."/>
            <person name="Lazar J."/>
            <person name="Pasko D."/>
            <person name="Tonellato P.J."/>
            <person name="Twigger S."/>
            <person name="Ponting C.P."/>
            <person name="Duarte J.M."/>
            <person name="Rice S."/>
            <person name="Goodstadt L."/>
            <person name="Beatson S.A."/>
            <person name="Emes R.D."/>
            <person name="Winter E.E."/>
            <person name="Webber C."/>
            <person name="Brandt P."/>
            <person name="Nyakatura G."/>
            <person name="Adetobi M."/>
            <person name="Chiaromonte F."/>
            <person name="Elnitski L."/>
            <person name="Eswara P."/>
            <person name="Hardison R.C."/>
            <person name="Hou M."/>
            <person name="Kolbe D."/>
            <person name="Makova K."/>
            <person name="Miller W."/>
            <person name="Nekrutenko A."/>
            <person name="Riemer C."/>
            <person name="Schwartz S."/>
            <person name="Taylor J."/>
            <person name="Yang S."/>
            <person name="Zhang Y."/>
            <person name="Lindpaintner K."/>
            <person name="Andrews T.D."/>
            <person name="Caccamo M."/>
            <person name="Clamp M."/>
            <person name="Clarke L."/>
            <person name="Curwen V."/>
            <person name="Durbin R.M."/>
            <person name="Eyras E."/>
            <person name="Searle S.M."/>
            <person name="Cooper G.M."/>
            <person name="Batzoglou S."/>
            <person name="Brudno M."/>
            <person name="Sidow A."/>
            <person name="Stone E.A."/>
            <person name="Payseur B.A."/>
            <person name="Bourque G."/>
            <person name="Lopez-Otin C."/>
            <person name="Puente X.S."/>
            <person name="Chakrabarti K."/>
            <person name="Chatterji S."/>
            <person name="Dewey C."/>
            <person name="Pachter L."/>
            <person name="Bray N."/>
            <person name="Yap V.B."/>
            <person name="Caspi A."/>
            <person name="Tesler G."/>
            <person name="Pevzner P.A."/>
            <person name="Haussler D."/>
            <person name="Roskin K.M."/>
            <person name="Baertsch R."/>
            <person name="Clawson H."/>
            <person name="Furey T.S."/>
            <person name="Hinrichs A.S."/>
            <person name="Karolchik D."/>
            <person name="Kent W.J."/>
            <person name="Rosenbloom K.R."/>
            <person name="Trumbower H."/>
            <person name="Weirauch M."/>
            <person name="Cooper D.N."/>
            <person name="Stenson P.D."/>
            <person name="Ma B."/>
            <person name="Brent M."/>
            <person name="Arumugam M."/>
            <person name="Shteynberg D."/>
            <person name="Copley R.R."/>
            <person name="Taylor M.S."/>
            <person name="Riethman H."/>
            <person name="Mudunuri U."/>
            <person name="Peterson J."/>
            <person name="Guyer M."/>
            <person name="Felsenfeld A."/>
            <person name="Old S."/>
            <person name="Mockrin S."/>
            <person name="Collins F.S."/>
        </authorList>
    </citation>
    <scope>NUCLEOTIDE SEQUENCE [LARGE SCALE GENOMIC DNA]</scope>
    <source>
        <strain>Brown Norway</strain>
    </source>
</reference>
<reference key="2">
    <citation type="journal article" date="2004" name="Genome Res.">
        <title>The status, quality, and expansion of the NIH full-length cDNA project: the Mammalian Gene Collection (MGC).</title>
        <authorList>
            <consortium name="The MGC Project Team"/>
        </authorList>
    </citation>
    <scope>NUCLEOTIDE SEQUENCE [LARGE SCALE MRNA] OF 208-653</scope>
    <source>
        <tissue>Spleen</tissue>
    </source>
</reference>
<reference key="3">
    <citation type="journal article" date="1987" name="J. Cell Biol.">
        <title>Two integral membrane proteins located in the cis-middle and trans-part of the Golgi system acquire sialylated N-linked carbohydrates and display different turnovers and sensitivity to cAMP-dependent phosphorylation.</title>
        <authorList>
            <person name="Yuan L."/>
            <person name="Barriocanal J.G."/>
            <person name="Bonifacino J.S."/>
            <person name="Sandoval I.V."/>
        </authorList>
    </citation>
    <scope>SUBCELLULAR LOCATION</scope>
    <scope>TISSUE SPECIFICITY</scope>
    <scope>GLYCOSYLATION</scope>
    <scope>PHOSPHORYLATION</scope>
</reference>
<reference key="4">
    <citation type="journal article" date="2012" name="Nat. Commun.">
        <title>Quantitative maps of protein phosphorylation sites across 14 different rat organs and tissues.</title>
        <authorList>
            <person name="Lundby A."/>
            <person name="Secher A."/>
            <person name="Lage K."/>
            <person name="Nordsborg N.B."/>
            <person name="Dmytriyev A."/>
            <person name="Lundby C."/>
            <person name="Olsen J.V."/>
        </authorList>
    </citation>
    <scope>PHOSPHORYLATION [LARGE SCALE ANALYSIS] AT SER-328 AND SER-538</scope>
    <scope>IDENTIFICATION BY MASS SPECTROMETRY [LARGE SCALE ANALYSIS]</scope>
</reference>
<keyword id="KW-0175">Coiled coil</keyword>
<keyword id="KW-0967">Endosome</keyword>
<keyword id="KW-0325">Glycoprotein</keyword>
<keyword id="KW-0333">Golgi apparatus</keyword>
<keyword id="KW-0449">Lipoprotein</keyword>
<keyword id="KW-0472">Membrane</keyword>
<keyword id="KW-0519">Myristate</keyword>
<keyword id="KW-0597">Phosphoprotein</keyword>
<keyword id="KW-1185">Reference proteome</keyword>
<keyword id="KW-0735">Signal-anchor</keyword>
<keyword id="KW-0812">Transmembrane</keyword>
<keyword id="KW-1133">Transmembrane helix</keyword>
<keyword id="KW-0813">Transport</keyword>
<name>GOLI4_RAT</name>
<accession>Q5BJK8</accession>
<sequence>MGNGMCSRKQKRIFQTLLLLTVVFGFLYGAMLYLELQTQLRKAEAVALKYQQHQDSLSAQLQVVYEHRSRLEKSLQKERLEHKKAKEDFLVYKLEAQETLNKGRQDSNSRYSALNVQHQMLKSQHEELRKQHSDLEEEHRKQGEDFSRAFNDHKQRYLQLQQEKEQELSKLKETVYNLREENRQLRKAHQDIHTQLQDVKTQVAEYKQLKDTLNRIPSFRNPDPAEQQNVTFTHGTHPPQGYNVREKLTGELQEGQQNHDAMPRRMEEKPLSSMQKEAGFQALEEQNQVEPREPEGRQVEEEHRKALEEEEMEQVGQAEHLEEEHDPSPEEQDREWRDQRRQNAAHLLDGRPQAEIEHSTKAATNFRSPYEEQLEQQRLAARRDEEAQRLREHQEALHQQRLHGQLLRQQQQQQYLAREMAQQKQADHEEGQQQYQLRQQAHSDAVENDVAQGAEDQGIPEEEGGAYDRDNQRQDEAEGDPGNRQEFHEPGHQEGDPEAEADRAAAQDINPADDPNNQGEDEFEEAEQVREENLPEESEERKQSEAKQGNVEMDEHLVMAGNPDQQEDNVDEQYQEEGEEEVQEDLTEEKKRELEHNAEETYGENPDDKNNDVEEQGVPNRAHPKGRQEHYEEEEDEEDGAAVAEKSHRRAEM</sequence>
<dbReference type="EMBL" id="AABR03012131">
    <property type="status" value="NOT_ANNOTATED_CDS"/>
    <property type="molecule type" value="Genomic_DNA"/>
</dbReference>
<dbReference type="EMBL" id="BC091440">
    <property type="protein sequence ID" value="AAH91440.1"/>
    <property type="molecule type" value="mRNA"/>
</dbReference>
<dbReference type="RefSeq" id="NP_001386398.1">
    <property type="nucleotide sequence ID" value="NM_001399469.1"/>
</dbReference>
<dbReference type="RefSeq" id="XP_006232562.1">
    <property type="nucleotide sequence ID" value="XM_006232500.1"/>
</dbReference>
<dbReference type="SMR" id="Q5BJK8"/>
<dbReference type="FunCoup" id="Q5BJK8">
    <property type="interactions" value="1019"/>
</dbReference>
<dbReference type="IntAct" id="Q5BJK8">
    <property type="interactions" value="1"/>
</dbReference>
<dbReference type="STRING" id="10116.ENSRNOP00000073317"/>
<dbReference type="GlyCosmos" id="Q5BJK8">
    <property type="glycosylation" value="1 site, No reported glycans"/>
</dbReference>
<dbReference type="GlyGen" id="Q5BJK8">
    <property type="glycosylation" value="1 site"/>
</dbReference>
<dbReference type="iPTMnet" id="Q5BJK8"/>
<dbReference type="PhosphoSitePlus" id="Q5BJK8"/>
<dbReference type="SwissPalm" id="Q5BJK8"/>
<dbReference type="jPOST" id="Q5BJK8"/>
<dbReference type="PaxDb" id="10116-ENSRNOP00000060365"/>
<dbReference type="Ensembl" id="ENSRNOT00000037115.6">
    <property type="protein sequence ID" value="ENSRNOP00000035176.3"/>
    <property type="gene ID" value="ENSRNOG00000024213.7"/>
</dbReference>
<dbReference type="GeneID" id="310526"/>
<dbReference type="UCSC" id="RGD:1310948">
    <property type="organism name" value="rat"/>
</dbReference>
<dbReference type="AGR" id="RGD:1310948"/>
<dbReference type="RGD" id="1310948">
    <property type="gene designation" value="Golim4"/>
</dbReference>
<dbReference type="eggNOG" id="ENOG502R4Q5">
    <property type="taxonomic scope" value="Eukaryota"/>
</dbReference>
<dbReference type="GeneTree" id="ENSGT00390000004096"/>
<dbReference type="InParanoid" id="Q5BJK8"/>
<dbReference type="PRO" id="PR:Q5BJK8"/>
<dbReference type="Proteomes" id="UP000002494">
    <property type="component" value="Chromosome 2"/>
</dbReference>
<dbReference type="Bgee" id="ENSRNOG00000024213">
    <property type="expression patterns" value="Expressed in lung and 18 other cell types or tissues"/>
</dbReference>
<dbReference type="ExpressionAtlas" id="Q5BJK8">
    <property type="expression patterns" value="baseline and differential"/>
</dbReference>
<dbReference type="GO" id="GO:0010008">
    <property type="term" value="C:endosome membrane"/>
    <property type="evidence" value="ECO:0007669"/>
    <property type="project" value="UniProtKB-SubCell"/>
</dbReference>
<dbReference type="GO" id="GO:0005794">
    <property type="term" value="C:Golgi apparatus"/>
    <property type="evidence" value="ECO:0000318"/>
    <property type="project" value="GO_Central"/>
</dbReference>
<dbReference type="GO" id="GO:0032580">
    <property type="term" value="C:Golgi cisterna membrane"/>
    <property type="evidence" value="ECO:0007669"/>
    <property type="project" value="UniProtKB-SubCell"/>
</dbReference>
<dbReference type="GO" id="GO:0000139">
    <property type="term" value="C:Golgi membrane"/>
    <property type="evidence" value="ECO:0007669"/>
    <property type="project" value="InterPro"/>
</dbReference>
<dbReference type="GO" id="GO:0016020">
    <property type="term" value="C:membrane"/>
    <property type="evidence" value="ECO:0000266"/>
    <property type="project" value="RGD"/>
</dbReference>
<dbReference type="InterPro" id="IPR042336">
    <property type="entry name" value="GOLIM4"/>
</dbReference>
<dbReference type="PANTHER" id="PTHR22909">
    <property type="entry name" value="GOLGI INTEGRAL MEMBRANE PROTEIN 4"/>
    <property type="match status" value="1"/>
</dbReference>
<dbReference type="PANTHER" id="PTHR22909:SF22">
    <property type="entry name" value="GOLGI INTEGRAL MEMBRANE PROTEIN 4"/>
    <property type="match status" value="1"/>
</dbReference>